<evidence type="ECO:0000250" key="1"/>
<evidence type="ECO:0000255" key="2">
    <source>
        <dbReference type="HAMAP-Rule" id="MF_00182"/>
    </source>
</evidence>
<evidence type="ECO:0000305" key="3"/>
<name>FMT_SALTY</name>
<keyword id="KW-0648">Protein biosynthesis</keyword>
<keyword id="KW-1185">Reference proteome</keyword>
<keyword id="KW-0808">Transferase</keyword>
<accession>Q8ZLM6</accession>
<dbReference type="EC" id="2.1.2.9" evidence="2"/>
<dbReference type="EMBL" id="AE006468">
    <property type="protein sequence ID" value="AAL22270.1"/>
    <property type="molecule type" value="Genomic_DNA"/>
</dbReference>
<dbReference type="RefSeq" id="NP_462311.1">
    <property type="nucleotide sequence ID" value="NC_003197.2"/>
</dbReference>
<dbReference type="RefSeq" id="WP_001285165.1">
    <property type="nucleotide sequence ID" value="NC_003197.2"/>
</dbReference>
<dbReference type="SMR" id="Q8ZLM6"/>
<dbReference type="STRING" id="99287.STM3407"/>
<dbReference type="PaxDb" id="99287-STM3407"/>
<dbReference type="GeneID" id="1254930"/>
<dbReference type="KEGG" id="stm:STM3407"/>
<dbReference type="PATRIC" id="fig|99287.12.peg.3605"/>
<dbReference type="HOGENOM" id="CLU_033347_1_2_6"/>
<dbReference type="OMA" id="GITTMLM"/>
<dbReference type="PhylomeDB" id="Q8ZLM6"/>
<dbReference type="BioCyc" id="SENT99287:STM3407-MONOMER"/>
<dbReference type="Proteomes" id="UP000001014">
    <property type="component" value="Chromosome"/>
</dbReference>
<dbReference type="GO" id="GO:0005829">
    <property type="term" value="C:cytosol"/>
    <property type="evidence" value="ECO:0000318"/>
    <property type="project" value="GO_Central"/>
</dbReference>
<dbReference type="GO" id="GO:0004479">
    <property type="term" value="F:methionyl-tRNA formyltransferase activity"/>
    <property type="evidence" value="ECO:0000318"/>
    <property type="project" value="GO_Central"/>
</dbReference>
<dbReference type="GO" id="GO:0071951">
    <property type="term" value="P:conversion of methionyl-tRNA to N-formyl-methionyl-tRNA"/>
    <property type="evidence" value="ECO:0000318"/>
    <property type="project" value="GO_Central"/>
</dbReference>
<dbReference type="CDD" id="cd08646">
    <property type="entry name" value="FMT_core_Met-tRNA-FMT_N"/>
    <property type="match status" value="1"/>
</dbReference>
<dbReference type="CDD" id="cd08704">
    <property type="entry name" value="Met_tRNA_FMT_C"/>
    <property type="match status" value="1"/>
</dbReference>
<dbReference type="FunFam" id="3.10.25.10:FF:000001">
    <property type="entry name" value="Methionyl-tRNA formyltransferase"/>
    <property type="match status" value="1"/>
</dbReference>
<dbReference type="FunFam" id="3.40.50.170:FF:000003">
    <property type="entry name" value="Methionyl-tRNA formyltransferase"/>
    <property type="match status" value="1"/>
</dbReference>
<dbReference type="Gene3D" id="3.10.25.10">
    <property type="entry name" value="Formyl transferase, C-terminal domain"/>
    <property type="match status" value="1"/>
</dbReference>
<dbReference type="Gene3D" id="3.40.50.170">
    <property type="entry name" value="Formyl transferase, N-terminal domain"/>
    <property type="match status" value="1"/>
</dbReference>
<dbReference type="HAMAP" id="MF_00182">
    <property type="entry name" value="Formyl_trans"/>
    <property type="match status" value="1"/>
</dbReference>
<dbReference type="InterPro" id="IPR005794">
    <property type="entry name" value="Fmt"/>
</dbReference>
<dbReference type="InterPro" id="IPR005793">
    <property type="entry name" value="Formyl_trans_C"/>
</dbReference>
<dbReference type="InterPro" id="IPR037022">
    <property type="entry name" value="Formyl_trans_C_sf"/>
</dbReference>
<dbReference type="InterPro" id="IPR002376">
    <property type="entry name" value="Formyl_transf_N"/>
</dbReference>
<dbReference type="InterPro" id="IPR036477">
    <property type="entry name" value="Formyl_transf_N_sf"/>
</dbReference>
<dbReference type="InterPro" id="IPR011034">
    <property type="entry name" value="Formyl_transferase-like_C_sf"/>
</dbReference>
<dbReference type="InterPro" id="IPR001555">
    <property type="entry name" value="GART_AS"/>
</dbReference>
<dbReference type="InterPro" id="IPR044135">
    <property type="entry name" value="Met-tRNA-FMT_C"/>
</dbReference>
<dbReference type="InterPro" id="IPR041711">
    <property type="entry name" value="Met-tRNA-FMT_N"/>
</dbReference>
<dbReference type="NCBIfam" id="TIGR00460">
    <property type="entry name" value="fmt"/>
    <property type="match status" value="1"/>
</dbReference>
<dbReference type="PANTHER" id="PTHR11138">
    <property type="entry name" value="METHIONYL-TRNA FORMYLTRANSFERASE"/>
    <property type="match status" value="1"/>
</dbReference>
<dbReference type="PANTHER" id="PTHR11138:SF5">
    <property type="entry name" value="METHIONYL-TRNA FORMYLTRANSFERASE, MITOCHONDRIAL"/>
    <property type="match status" value="1"/>
</dbReference>
<dbReference type="Pfam" id="PF02911">
    <property type="entry name" value="Formyl_trans_C"/>
    <property type="match status" value="1"/>
</dbReference>
<dbReference type="Pfam" id="PF00551">
    <property type="entry name" value="Formyl_trans_N"/>
    <property type="match status" value="1"/>
</dbReference>
<dbReference type="SUPFAM" id="SSF50486">
    <property type="entry name" value="FMT C-terminal domain-like"/>
    <property type="match status" value="1"/>
</dbReference>
<dbReference type="SUPFAM" id="SSF53328">
    <property type="entry name" value="Formyltransferase"/>
    <property type="match status" value="1"/>
</dbReference>
<dbReference type="PROSITE" id="PS00373">
    <property type="entry name" value="GART"/>
    <property type="match status" value="1"/>
</dbReference>
<protein>
    <recommendedName>
        <fullName evidence="2">Methionyl-tRNA formyltransferase</fullName>
        <ecNumber evidence="2">2.1.2.9</ecNumber>
    </recommendedName>
</protein>
<proteinExistence type="inferred from homology"/>
<sequence length="315" mass="34029">MSDSLRIIFAGTPDFAARHLDALLTSGHNVVGVFTQPDRPAGRGKKLMPSPVKVLAEEKGLPVFQPVSLRPQENQHLVADLHADVMVVVAYGLILPKAVLDMPRLGCINVHGSLLPRWRGAAPIQRSLWAGDAETGVTIMQMDVGLDTGDMLYKLACPITAEDTSGSLYNKLAELGPQGLITTLKQLADGTATPEAQNEALVTHAEKLSKEEARIDWSLSAAQLERCIRAFNPWPMSWLEIDGQPVKVWQASVIEDATQSLPGTILAATKQGIQVATGKGILNLLSLQPAGKKAMSAQDLLNSRREWFIPGNRLA</sequence>
<organism>
    <name type="scientific">Salmonella typhimurium (strain LT2 / SGSC1412 / ATCC 700720)</name>
    <dbReference type="NCBI Taxonomy" id="99287"/>
    <lineage>
        <taxon>Bacteria</taxon>
        <taxon>Pseudomonadati</taxon>
        <taxon>Pseudomonadota</taxon>
        <taxon>Gammaproteobacteria</taxon>
        <taxon>Enterobacterales</taxon>
        <taxon>Enterobacteriaceae</taxon>
        <taxon>Salmonella</taxon>
    </lineage>
</organism>
<feature type="initiator methionine" description="Removed" evidence="1">
    <location>
        <position position="1"/>
    </location>
</feature>
<feature type="chain" id="PRO_0000083041" description="Methionyl-tRNA formyltransferase">
    <location>
        <begin position="2"/>
        <end position="315"/>
    </location>
</feature>
<feature type="region of interest" description="N-terminal domain">
    <location>
        <begin position="2"/>
        <end position="189"/>
    </location>
</feature>
<feature type="region of interest" description="C-terminal domain">
    <location>
        <begin position="210"/>
        <end position="315"/>
    </location>
</feature>
<feature type="binding site" evidence="2">
    <location>
        <begin position="113"/>
        <end position="116"/>
    </location>
    <ligand>
        <name>(6S)-5,6,7,8-tetrahydrofolate</name>
        <dbReference type="ChEBI" id="CHEBI:57453"/>
    </ligand>
</feature>
<comment type="function">
    <text evidence="2">Attaches a formyl group to the free amino group of methionyl-tRNA(fMet). The formyl group appears to play a dual role in the initiator identity of N-formylmethionyl-tRNA by promoting its recognition by IF2 and preventing the misappropriation of this tRNA by the elongation apparatus.</text>
</comment>
<comment type="catalytic activity">
    <reaction evidence="2">
        <text>L-methionyl-tRNA(fMet) + (6R)-10-formyltetrahydrofolate = N-formyl-L-methionyl-tRNA(fMet) + (6S)-5,6,7,8-tetrahydrofolate + H(+)</text>
        <dbReference type="Rhea" id="RHEA:24380"/>
        <dbReference type="Rhea" id="RHEA-COMP:9952"/>
        <dbReference type="Rhea" id="RHEA-COMP:9953"/>
        <dbReference type="ChEBI" id="CHEBI:15378"/>
        <dbReference type="ChEBI" id="CHEBI:57453"/>
        <dbReference type="ChEBI" id="CHEBI:78530"/>
        <dbReference type="ChEBI" id="CHEBI:78844"/>
        <dbReference type="ChEBI" id="CHEBI:195366"/>
        <dbReference type="EC" id="2.1.2.9"/>
    </reaction>
</comment>
<comment type="domain">
    <text>Composed of an N- and a C-terminal domain. The N-terminal domain carries the tetrahydrofolate (THF)-binding site and the C-terminal domain is presumably involved in positioning the Met-tRNA substrate for the formylation reaction.</text>
</comment>
<comment type="similarity">
    <text evidence="2 3">Belongs to the Fmt family.</text>
</comment>
<gene>
    <name evidence="2" type="primary">fmt</name>
    <name type="ordered locus">STM3407</name>
</gene>
<reference key="1">
    <citation type="journal article" date="2001" name="Nature">
        <title>Complete genome sequence of Salmonella enterica serovar Typhimurium LT2.</title>
        <authorList>
            <person name="McClelland M."/>
            <person name="Sanderson K.E."/>
            <person name="Spieth J."/>
            <person name="Clifton S.W."/>
            <person name="Latreille P."/>
            <person name="Courtney L."/>
            <person name="Porwollik S."/>
            <person name="Ali J."/>
            <person name="Dante M."/>
            <person name="Du F."/>
            <person name="Hou S."/>
            <person name="Layman D."/>
            <person name="Leonard S."/>
            <person name="Nguyen C."/>
            <person name="Scott K."/>
            <person name="Holmes A."/>
            <person name="Grewal N."/>
            <person name="Mulvaney E."/>
            <person name="Ryan E."/>
            <person name="Sun H."/>
            <person name="Florea L."/>
            <person name="Miller W."/>
            <person name="Stoneking T."/>
            <person name="Nhan M."/>
            <person name="Waterston R."/>
            <person name="Wilson R.K."/>
        </authorList>
    </citation>
    <scope>NUCLEOTIDE SEQUENCE [LARGE SCALE GENOMIC DNA]</scope>
    <source>
        <strain>LT2 / SGSC1412 / ATCC 700720</strain>
    </source>
</reference>